<organism>
    <name type="scientific">Mycobacterium tuberculosis (strain CDC 1551 / Oshkosh)</name>
    <dbReference type="NCBI Taxonomy" id="83331"/>
    <lineage>
        <taxon>Bacteria</taxon>
        <taxon>Bacillati</taxon>
        <taxon>Actinomycetota</taxon>
        <taxon>Actinomycetes</taxon>
        <taxon>Mycobacteriales</taxon>
        <taxon>Mycobacteriaceae</taxon>
        <taxon>Mycobacterium</taxon>
        <taxon>Mycobacterium tuberculosis complex</taxon>
    </lineage>
</organism>
<reference key="1">
    <citation type="journal article" date="2002" name="J. Bacteriol.">
        <title>Whole-genome comparison of Mycobacterium tuberculosis clinical and laboratory strains.</title>
        <authorList>
            <person name="Fleischmann R.D."/>
            <person name="Alland D."/>
            <person name="Eisen J.A."/>
            <person name="Carpenter L."/>
            <person name="White O."/>
            <person name="Peterson J.D."/>
            <person name="DeBoy R.T."/>
            <person name="Dodson R.J."/>
            <person name="Gwinn M.L."/>
            <person name="Haft D.H."/>
            <person name="Hickey E.K."/>
            <person name="Kolonay J.F."/>
            <person name="Nelson W.C."/>
            <person name="Umayam L.A."/>
            <person name="Ermolaeva M.D."/>
            <person name="Salzberg S.L."/>
            <person name="Delcher A."/>
            <person name="Utterback T.R."/>
            <person name="Weidman J.F."/>
            <person name="Khouri H.M."/>
            <person name="Gill J."/>
            <person name="Mikula A."/>
            <person name="Bishai W."/>
            <person name="Jacobs W.R. Jr."/>
            <person name="Venter J.C."/>
            <person name="Fraser C.M."/>
        </authorList>
    </citation>
    <scope>NUCLEOTIDE SEQUENCE [LARGE SCALE GENOMIC DNA]</scope>
    <source>
        <strain>CDC 1551 / Oshkosh</strain>
    </source>
</reference>
<name>MRAZ_MYCTO</name>
<sequence length="143" mass="15912">MFLGTYTPKLDDKGRLTLPAKFRDALAGGLMVTKSQDHSLAVYPRAAFEQLARRASKAPRSNPEARAFLRNLAAGTDEQHPDSQGRITLSADHRRYASLSKDCVVIGAVDYLEIWDAQAWQNYQQIHEENFSAASDEALGDIF</sequence>
<proteinExistence type="inferred from homology"/>
<comment type="subunit">
    <text evidence="1">Forms oligomers.</text>
</comment>
<comment type="subcellular location">
    <subcellularLocation>
        <location evidence="1">Cytoplasm</location>
        <location evidence="1">Nucleoid</location>
    </subcellularLocation>
</comment>
<comment type="similarity">
    <text evidence="1">Belongs to the MraZ family.</text>
</comment>
<dbReference type="EMBL" id="AE000516">
    <property type="protein sequence ID" value="AAK46509.1"/>
    <property type="molecule type" value="Genomic_DNA"/>
</dbReference>
<dbReference type="PIR" id="B70581">
    <property type="entry name" value="B70581"/>
</dbReference>
<dbReference type="RefSeq" id="WP_003411225.1">
    <property type="nucleotide sequence ID" value="NZ_KK341227.1"/>
</dbReference>
<dbReference type="SMR" id="P9WJN8"/>
<dbReference type="KEGG" id="mtc:MT2224"/>
<dbReference type="PATRIC" id="fig|83331.31.peg.2398"/>
<dbReference type="HOGENOM" id="CLU_107907_0_5_11"/>
<dbReference type="Proteomes" id="UP000001020">
    <property type="component" value="Chromosome"/>
</dbReference>
<dbReference type="GO" id="GO:0005737">
    <property type="term" value="C:cytoplasm"/>
    <property type="evidence" value="ECO:0007669"/>
    <property type="project" value="UniProtKB-UniRule"/>
</dbReference>
<dbReference type="GO" id="GO:0009295">
    <property type="term" value="C:nucleoid"/>
    <property type="evidence" value="ECO:0007669"/>
    <property type="project" value="UniProtKB-SubCell"/>
</dbReference>
<dbReference type="GO" id="GO:0003700">
    <property type="term" value="F:DNA-binding transcription factor activity"/>
    <property type="evidence" value="ECO:0007669"/>
    <property type="project" value="UniProtKB-UniRule"/>
</dbReference>
<dbReference type="GO" id="GO:0000976">
    <property type="term" value="F:transcription cis-regulatory region binding"/>
    <property type="evidence" value="ECO:0007669"/>
    <property type="project" value="TreeGrafter"/>
</dbReference>
<dbReference type="GO" id="GO:2000143">
    <property type="term" value="P:negative regulation of DNA-templated transcription initiation"/>
    <property type="evidence" value="ECO:0007669"/>
    <property type="project" value="TreeGrafter"/>
</dbReference>
<dbReference type="CDD" id="cd16321">
    <property type="entry name" value="MraZ_C"/>
    <property type="match status" value="1"/>
</dbReference>
<dbReference type="CDD" id="cd16320">
    <property type="entry name" value="MraZ_N"/>
    <property type="match status" value="1"/>
</dbReference>
<dbReference type="FunFam" id="3.40.1550.20:FF:000004">
    <property type="entry name" value="Transcriptional regulator MraZ"/>
    <property type="match status" value="1"/>
</dbReference>
<dbReference type="Gene3D" id="3.40.1550.20">
    <property type="entry name" value="Transcriptional regulator MraZ domain"/>
    <property type="match status" value="1"/>
</dbReference>
<dbReference type="HAMAP" id="MF_01008">
    <property type="entry name" value="MraZ"/>
    <property type="match status" value="1"/>
</dbReference>
<dbReference type="InterPro" id="IPR003444">
    <property type="entry name" value="MraZ"/>
</dbReference>
<dbReference type="InterPro" id="IPR035644">
    <property type="entry name" value="MraZ_C"/>
</dbReference>
<dbReference type="InterPro" id="IPR020603">
    <property type="entry name" value="MraZ_dom"/>
</dbReference>
<dbReference type="InterPro" id="IPR035642">
    <property type="entry name" value="MraZ_N"/>
</dbReference>
<dbReference type="InterPro" id="IPR038619">
    <property type="entry name" value="MraZ_sf"/>
</dbReference>
<dbReference type="InterPro" id="IPR007159">
    <property type="entry name" value="SpoVT-AbrB_dom"/>
</dbReference>
<dbReference type="InterPro" id="IPR037914">
    <property type="entry name" value="SpoVT-AbrB_sf"/>
</dbReference>
<dbReference type="NCBIfam" id="TIGR00242">
    <property type="entry name" value="division/cell wall cluster transcriptional repressor MraZ"/>
    <property type="match status" value="1"/>
</dbReference>
<dbReference type="PANTHER" id="PTHR34701">
    <property type="entry name" value="TRANSCRIPTIONAL REGULATOR MRAZ"/>
    <property type="match status" value="1"/>
</dbReference>
<dbReference type="PANTHER" id="PTHR34701:SF1">
    <property type="entry name" value="TRANSCRIPTIONAL REGULATOR MRAZ"/>
    <property type="match status" value="1"/>
</dbReference>
<dbReference type="Pfam" id="PF02381">
    <property type="entry name" value="MraZ"/>
    <property type="match status" value="2"/>
</dbReference>
<dbReference type="SUPFAM" id="SSF89447">
    <property type="entry name" value="AbrB/MazE/MraZ-like"/>
    <property type="match status" value="1"/>
</dbReference>
<dbReference type="PROSITE" id="PS51740">
    <property type="entry name" value="SPOVT_ABRB"/>
    <property type="match status" value="2"/>
</dbReference>
<keyword id="KW-0963">Cytoplasm</keyword>
<keyword id="KW-0238">DNA-binding</keyword>
<keyword id="KW-1185">Reference proteome</keyword>
<keyword id="KW-0677">Repeat</keyword>
<keyword id="KW-0804">Transcription</keyword>
<keyword id="KW-0805">Transcription regulation</keyword>
<accession>P9WJN8</accession>
<accession>L0TAD8</accession>
<accession>O06211</accession>
<accession>P65436</accession>
<protein>
    <recommendedName>
        <fullName>Transcriptional regulator MraZ</fullName>
    </recommendedName>
</protein>
<gene>
    <name evidence="1" type="primary">mraZ</name>
    <name type="ordered locus">MT2224</name>
</gene>
<feature type="chain" id="PRO_0000427796" description="Transcriptional regulator MraZ">
    <location>
        <begin position="1"/>
        <end position="143"/>
    </location>
</feature>
<feature type="domain" description="SpoVT-AbrB 1" evidence="2">
    <location>
        <begin position="5"/>
        <end position="47"/>
    </location>
</feature>
<feature type="domain" description="SpoVT-AbrB 2" evidence="2">
    <location>
        <begin position="76"/>
        <end position="119"/>
    </location>
</feature>
<evidence type="ECO:0000255" key="1">
    <source>
        <dbReference type="HAMAP-Rule" id="MF_01008"/>
    </source>
</evidence>
<evidence type="ECO:0000255" key="2">
    <source>
        <dbReference type="PROSITE-ProRule" id="PRU01076"/>
    </source>
</evidence>